<sequence length="319" mass="34423">MRRSRILGIGSYLPKSLVTNDELACTVETSDEWIVKRTGIRQRYIAADDQMTSDMAVEAAKLALNDSGINKQDVDLIVVATTTPDRTFPSCATIVQSKLECKNAFAFDIQAVCSGFIYAMAIADNFIKSGQVNVSLVIGAEVMSRILDWKDRSTCVLFGDGAGAVVLSNNSARNTGVISTILYSDGTLHNLLYTSGGTAYNGVAGTICMNGTVVFEHAIEKLSASIVEILNKNNLSIDEVNWFVLHQANIRIIELVARRLKIPSEKMVISINQHANTSAASIPLALSYAKNSGKLKQDDLVILAAIGAGITWGVCLVRM</sequence>
<comment type="function">
    <text evidence="1">Catalyzes the condensation reaction of fatty acid synthesis by the addition to an acyl acceptor of two carbons from malonyl-ACP. Catalyzes the first condensation reaction which initiates fatty acid synthesis and may therefore play a role in governing the total rate of fatty acid production. Possesses both acetoacetyl-ACP synthase and acetyl transacylase activities. Its substrate specificity determines the biosynthesis of branched-chain and/or straight-chain of fatty acids.</text>
</comment>
<comment type="catalytic activity">
    <reaction evidence="1">
        <text>malonyl-[ACP] + acetyl-CoA + H(+) = 3-oxobutanoyl-[ACP] + CO2 + CoA</text>
        <dbReference type="Rhea" id="RHEA:12080"/>
        <dbReference type="Rhea" id="RHEA-COMP:9623"/>
        <dbReference type="Rhea" id="RHEA-COMP:9625"/>
        <dbReference type="ChEBI" id="CHEBI:15378"/>
        <dbReference type="ChEBI" id="CHEBI:16526"/>
        <dbReference type="ChEBI" id="CHEBI:57287"/>
        <dbReference type="ChEBI" id="CHEBI:57288"/>
        <dbReference type="ChEBI" id="CHEBI:78449"/>
        <dbReference type="ChEBI" id="CHEBI:78450"/>
        <dbReference type="EC" id="2.3.1.180"/>
    </reaction>
</comment>
<comment type="pathway">
    <text evidence="1">Lipid metabolism; fatty acid biosynthesis.</text>
</comment>
<comment type="subunit">
    <text evidence="1">Homodimer.</text>
</comment>
<comment type="subcellular location">
    <subcellularLocation>
        <location evidence="1">Cytoplasm</location>
    </subcellularLocation>
</comment>
<comment type="domain">
    <text evidence="1">The last Arg residue of the ACP-binding site is essential for the weak association between ACP/AcpP and FabH.</text>
</comment>
<comment type="similarity">
    <text evidence="1">Belongs to the thiolase-like superfamily. FabH family.</text>
</comment>
<organism>
    <name type="scientific">Ehrlichia ruminantium (strain Gardel)</name>
    <dbReference type="NCBI Taxonomy" id="302409"/>
    <lineage>
        <taxon>Bacteria</taxon>
        <taxon>Pseudomonadati</taxon>
        <taxon>Pseudomonadota</taxon>
        <taxon>Alphaproteobacteria</taxon>
        <taxon>Rickettsiales</taxon>
        <taxon>Anaplasmataceae</taxon>
        <taxon>Ehrlichia</taxon>
    </lineage>
</organism>
<name>FABH_EHRRG</name>
<proteinExistence type="inferred from homology"/>
<accession>Q5FFP2</accession>
<evidence type="ECO:0000255" key="1">
    <source>
        <dbReference type="HAMAP-Rule" id="MF_01815"/>
    </source>
</evidence>
<feature type="chain" id="PRO_1000056359" description="Beta-ketoacyl-[acyl-carrier-protein] synthase III">
    <location>
        <begin position="1"/>
        <end position="319"/>
    </location>
</feature>
<feature type="region of interest" description="ACP-binding" evidence="1">
    <location>
        <begin position="247"/>
        <end position="251"/>
    </location>
</feature>
<feature type="active site" evidence="1">
    <location>
        <position position="113"/>
    </location>
</feature>
<feature type="active site" evidence="1">
    <location>
        <position position="246"/>
    </location>
</feature>
<feature type="active site" evidence="1">
    <location>
        <position position="276"/>
    </location>
</feature>
<reference key="1">
    <citation type="journal article" date="2006" name="J. Bacteriol.">
        <title>Comparative genomic analysis of three strains of Ehrlichia ruminantium reveals an active process of genome size plasticity.</title>
        <authorList>
            <person name="Frutos R."/>
            <person name="Viari A."/>
            <person name="Ferraz C."/>
            <person name="Morgat A."/>
            <person name="Eychenie S."/>
            <person name="Kandassamy Y."/>
            <person name="Chantal I."/>
            <person name="Bensaid A."/>
            <person name="Coissac E."/>
            <person name="Vachiery N."/>
            <person name="Demaille J."/>
            <person name="Martinez D."/>
        </authorList>
    </citation>
    <scope>NUCLEOTIDE SEQUENCE [LARGE SCALE GENOMIC DNA]</scope>
    <source>
        <strain>Gardel</strain>
    </source>
</reference>
<dbReference type="EC" id="2.3.1.180" evidence="1"/>
<dbReference type="EMBL" id="CR925677">
    <property type="protein sequence ID" value="CAI28044.1"/>
    <property type="molecule type" value="Genomic_DNA"/>
</dbReference>
<dbReference type="RefSeq" id="WP_011255704.1">
    <property type="nucleotide sequence ID" value="NC_006831.1"/>
</dbReference>
<dbReference type="SMR" id="Q5FFP2"/>
<dbReference type="KEGG" id="erg:ERGA_CDS_05920"/>
<dbReference type="HOGENOM" id="CLU_039592_3_1_5"/>
<dbReference type="OrthoDB" id="9815506at2"/>
<dbReference type="UniPathway" id="UPA00094"/>
<dbReference type="Proteomes" id="UP000000533">
    <property type="component" value="Chromosome"/>
</dbReference>
<dbReference type="GO" id="GO:0005737">
    <property type="term" value="C:cytoplasm"/>
    <property type="evidence" value="ECO:0007669"/>
    <property type="project" value="UniProtKB-SubCell"/>
</dbReference>
<dbReference type="GO" id="GO:0004315">
    <property type="term" value="F:3-oxoacyl-[acyl-carrier-protein] synthase activity"/>
    <property type="evidence" value="ECO:0007669"/>
    <property type="project" value="InterPro"/>
</dbReference>
<dbReference type="GO" id="GO:0033818">
    <property type="term" value="F:beta-ketoacyl-acyl-carrier-protein synthase III activity"/>
    <property type="evidence" value="ECO:0007669"/>
    <property type="project" value="UniProtKB-UniRule"/>
</dbReference>
<dbReference type="GO" id="GO:0006633">
    <property type="term" value="P:fatty acid biosynthetic process"/>
    <property type="evidence" value="ECO:0007669"/>
    <property type="project" value="UniProtKB-UniRule"/>
</dbReference>
<dbReference type="GO" id="GO:0044550">
    <property type="term" value="P:secondary metabolite biosynthetic process"/>
    <property type="evidence" value="ECO:0007669"/>
    <property type="project" value="TreeGrafter"/>
</dbReference>
<dbReference type="CDD" id="cd00830">
    <property type="entry name" value="KAS_III"/>
    <property type="match status" value="1"/>
</dbReference>
<dbReference type="FunFam" id="3.40.47.10:FF:000004">
    <property type="entry name" value="3-oxoacyl-[acyl-carrier-protein] synthase 3"/>
    <property type="match status" value="1"/>
</dbReference>
<dbReference type="Gene3D" id="3.40.47.10">
    <property type="match status" value="1"/>
</dbReference>
<dbReference type="HAMAP" id="MF_01815">
    <property type="entry name" value="FabH"/>
    <property type="match status" value="1"/>
</dbReference>
<dbReference type="InterPro" id="IPR013747">
    <property type="entry name" value="ACP_syn_III_C"/>
</dbReference>
<dbReference type="InterPro" id="IPR013751">
    <property type="entry name" value="ACP_syn_III_N"/>
</dbReference>
<dbReference type="InterPro" id="IPR004655">
    <property type="entry name" value="FabH"/>
</dbReference>
<dbReference type="InterPro" id="IPR016039">
    <property type="entry name" value="Thiolase-like"/>
</dbReference>
<dbReference type="NCBIfam" id="TIGR00747">
    <property type="entry name" value="fabH"/>
    <property type="match status" value="1"/>
</dbReference>
<dbReference type="NCBIfam" id="NF006829">
    <property type="entry name" value="PRK09352.1"/>
    <property type="match status" value="1"/>
</dbReference>
<dbReference type="PANTHER" id="PTHR34069">
    <property type="entry name" value="3-OXOACYL-[ACYL-CARRIER-PROTEIN] SYNTHASE 3"/>
    <property type="match status" value="1"/>
</dbReference>
<dbReference type="PANTHER" id="PTHR34069:SF2">
    <property type="entry name" value="BETA-KETOACYL-[ACYL-CARRIER-PROTEIN] SYNTHASE III"/>
    <property type="match status" value="1"/>
</dbReference>
<dbReference type="Pfam" id="PF08545">
    <property type="entry name" value="ACP_syn_III"/>
    <property type="match status" value="1"/>
</dbReference>
<dbReference type="Pfam" id="PF08541">
    <property type="entry name" value="ACP_syn_III_C"/>
    <property type="match status" value="1"/>
</dbReference>
<dbReference type="SUPFAM" id="SSF53901">
    <property type="entry name" value="Thiolase-like"/>
    <property type="match status" value="1"/>
</dbReference>
<keyword id="KW-0012">Acyltransferase</keyword>
<keyword id="KW-0963">Cytoplasm</keyword>
<keyword id="KW-0275">Fatty acid biosynthesis</keyword>
<keyword id="KW-0276">Fatty acid metabolism</keyword>
<keyword id="KW-0444">Lipid biosynthesis</keyword>
<keyword id="KW-0443">Lipid metabolism</keyword>
<keyword id="KW-0511">Multifunctional enzyme</keyword>
<keyword id="KW-0808">Transferase</keyword>
<protein>
    <recommendedName>
        <fullName evidence="1">Beta-ketoacyl-[acyl-carrier-protein] synthase III</fullName>
        <shortName evidence="1">Beta-ketoacyl-ACP synthase III</shortName>
        <shortName evidence="1">KAS III</shortName>
        <ecNumber evidence="1">2.3.1.180</ecNumber>
    </recommendedName>
    <alternativeName>
        <fullName evidence="1">3-oxoacyl-[acyl-carrier-protein] synthase 3</fullName>
    </alternativeName>
    <alternativeName>
        <fullName evidence="1">3-oxoacyl-[acyl-carrier-protein] synthase III</fullName>
    </alternativeName>
</protein>
<gene>
    <name evidence="1" type="primary">fabH</name>
    <name type="ordered locus">ERGA_CDS_05920</name>
</gene>